<proteinExistence type="evidence at protein level"/>
<comment type="catalytic activity">
    <reaction evidence="1 2">
        <text>(R)-glycerate + ATP = (2R)-3-phosphoglycerate + ADP + H(+)</text>
        <dbReference type="Rhea" id="RHEA:23516"/>
        <dbReference type="ChEBI" id="CHEBI:15378"/>
        <dbReference type="ChEBI" id="CHEBI:16659"/>
        <dbReference type="ChEBI" id="CHEBI:30616"/>
        <dbReference type="ChEBI" id="CHEBI:58272"/>
        <dbReference type="ChEBI" id="CHEBI:456216"/>
        <dbReference type="EC" id="2.7.1.31"/>
    </reaction>
</comment>
<comment type="biophysicochemical properties">
    <kinetics>
        <KM evidence="2">0.1 mM for D-glycerate</KM>
    </kinetics>
</comment>
<comment type="interaction">
    <interactant intactId="EBI-748515">
        <id>Q8IVS8</id>
    </interactant>
    <interactant intactId="EBI-11976299">
        <id>Q5BKX5-3</id>
        <label>ACTMAP</label>
    </interactant>
    <organismsDiffer>false</organismsDiffer>
    <experiments>3</experiments>
</comment>
<comment type="interaction">
    <interactant intactId="EBI-748515">
        <id>Q8IVS8</id>
    </interactant>
    <interactant intactId="EBI-10173507">
        <id>Q6UY14-3</id>
        <label>ADAMTSL4</label>
    </interactant>
    <organismsDiffer>false</organismsDiffer>
    <experiments>3</experiments>
</comment>
<comment type="interaction">
    <interactant intactId="EBI-748515">
        <id>Q8IVS8</id>
    </interactant>
    <interactant intactId="EBI-13345447">
        <id>Q8N9V6-2</id>
        <label>ANKRD53</label>
    </interactant>
    <organismsDiffer>false</organismsDiffer>
    <experiments>3</experiments>
</comment>
<comment type="interaction">
    <interactant intactId="EBI-748515">
        <id>Q8IVS8</id>
    </interactant>
    <interactant intactId="EBI-6425121">
        <id>Q96C12</id>
        <label>ARMC5</label>
    </interactant>
    <organismsDiffer>false</organismsDiffer>
    <experiments>3</experiments>
</comment>
<comment type="interaction">
    <interactant intactId="EBI-748515">
        <id>Q8IVS8</id>
    </interactant>
    <interactant intactId="EBI-12811889">
        <id>Q9Y6H3</id>
        <label>ATP23</label>
    </interactant>
    <organismsDiffer>false</organismsDiffer>
    <experiments>3</experiments>
</comment>
<comment type="interaction">
    <interactant intactId="EBI-748515">
        <id>Q8IVS8</id>
    </interactant>
    <interactant intactId="EBI-739580">
        <id>Q13137</id>
        <label>CALCOCO2</label>
    </interactant>
    <organismsDiffer>false</organismsDiffer>
    <experiments>3</experiments>
</comment>
<comment type="interaction">
    <interactant intactId="EBI-748515">
        <id>Q8IVS8</id>
    </interactant>
    <interactant intactId="EBI-739624">
        <id>Q8NHQ1</id>
        <label>CEP70</label>
    </interactant>
    <organismsDiffer>false</organismsDiffer>
    <experiments>3</experiments>
</comment>
<comment type="interaction">
    <interactant intactId="EBI-748515">
        <id>Q8IVS8</id>
    </interactant>
    <interactant intactId="EBI-740376">
        <id>Q86UW9</id>
        <label>DTX2</label>
    </interactant>
    <organismsDiffer>false</organismsDiffer>
    <experiments>6</experiments>
</comment>
<comment type="interaction">
    <interactant intactId="EBI-748515">
        <id>Q8IVS8</id>
    </interactant>
    <interactant intactId="EBI-2349927">
        <id>Q5JST6</id>
        <label>EFHC2</label>
    </interactant>
    <organismsDiffer>false</organismsDiffer>
    <experiments>3</experiments>
</comment>
<comment type="interaction">
    <interactant intactId="EBI-748515">
        <id>Q8IVS8</id>
    </interactant>
    <interactant intactId="EBI-750945">
        <id>Q9Y5P6</id>
        <label>GMPPB</label>
    </interactant>
    <organismsDiffer>false</organismsDiffer>
    <experiments>5</experiments>
</comment>
<comment type="interaction">
    <interactant intactId="EBI-748515">
        <id>Q8IVS8</id>
    </interactant>
    <interactant intactId="EBI-618309">
        <id>Q08379</id>
        <label>GOLGA2</label>
    </interactant>
    <organismsDiffer>false</organismsDiffer>
    <experiments>6</experiments>
</comment>
<comment type="interaction">
    <interactant intactId="EBI-748515">
        <id>Q8IVS8</id>
    </interactant>
    <interactant intactId="EBI-8638439">
        <id>Q8IYA8</id>
        <label>IHO1</label>
    </interactant>
    <organismsDiffer>false</organismsDiffer>
    <experiments>3</experiments>
</comment>
<comment type="interaction">
    <interactant intactId="EBI-748515">
        <id>Q8IVS8</id>
    </interactant>
    <interactant intactId="EBI-740929">
        <id>Q53G59</id>
        <label>KLHL12</label>
    </interactant>
    <organismsDiffer>false</organismsDiffer>
    <experiments>3</experiments>
</comment>
<comment type="interaction">
    <interactant intactId="EBI-748515">
        <id>Q8IVS8</id>
    </interactant>
    <interactant intactId="EBI-1223876">
        <id>P13646</id>
        <label>KRT13</label>
    </interactant>
    <organismsDiffer>false</organismsDiffer>
    <experiments>3</experiments>
</comment>
<comment type="interaction">
    <interactant intactId="EBI-748515">
        <id>Q8IVS8</id>
    </interactant>
    <interactant intactId="EBI-739566">
        <id>P19012</id>
        <label>KRT15</label>
    </interactant>
    <organismsDiffer>false</organismsDiffer>
    <experiments>3</experiments>
</comment>
<comment type="interaction">
    <interactant intactId="EBI-748515">
        <id>Q8IVS8</id>
    </interactant>
    <interactant intactId="EBI-742756">
        <id>P08727</id>
        <label>KRT19</label>
    </interactant>
    <organismsDiffer>false</organismsDiffer>
    <experiments>3</experiments>
</comment>
<comment type="interaction">
    <interactant intactId="EBI-748515">
        <id>Q8IVS8</id>
    </interactant>
    <interactant intactId="EBI-1047093">
        <id>O76011</id>
        <label>KRT34</label>
    </interactant>
    <organismsDiffer>false</organismsDiffer>
    <experiments>3</experiments>
</comment>
<comment type="interaction">
    <interactant intactId="EBI-748515">
        <id>Q8IVS8</id>
    </interactant>
    <interactant intactId="EBI-2949715">
        <id>O95678</id>
        <label>KRT75</label>
    </interactant>
    <organismsDiffer>false</organismsDiffer>
    <experiments>3</experiments>
</comment>
<comment type="interaction">
    <interactant intactId="EBI-748515">
        <id>Q8IVS8</id>
    </interactant>
    <interactant intactId="EBI-1048945">
        <id>Q3LI72</id>
        <label>KRTAP19-5</label>
    </interactant>
    <organismsDiffer>false</organismsDiffer>
    <experiments>3</experiments>
</comment>
<comment type="interaction">
    <interactant intactId="EBI-748515">
        <id>Q8IVS8</id>
    </interactant>
    <interactant intactId="EBI-11962084">
        <id>Q3LI66</id>
        <label>KRTAP6-2</label>
    </interactant>
    <organismsDiffer>false</organismsDiffer>
    <experiments>5</experiments>
</comment>
<comment type="interaction">
    <interactant intactId="EBI-748515">
        <id>Q8IVS8</id>
    </interactant>
    <interactant intactId="EBI-22311199">
        <id>Q3LI67</id>
        <label>KRTAP6-3</label>
    </interactant>
    <organismsDiffer>false</organismsDiffer>
    <experiments>3</experiments>
</comment>
<comment type="interaction">
    <interactant intactId="EBI-748515">
        <id>Q8IVS8</id>
    </interactant>
    <interactant intactId="EBI-741037">
        <id>Q9BRK4</id>
        <label>LZTS2</label>
    </interactant>
    <organismsDiffer>false</organismsDiffer>
    <experiments>3</experiments>
</comment>
<comment type="interaction">
    <interactant intactId="EBI-748515">
        <id>Q8IVS8</id>
    </interactant>
    <interactant intactId="EBI-716006">
        <id>Q9Y5V3</id>
        <label>MAGED1</label>
    </interactant>
    <organismsDiffer>false</organismsDiffer>
    <experiments>3</experiments>
</comment>
<comment type="interaction">
    <interactant intactId="EBI-748515">
        <id>Q8IVS8</id>
    </interactant>
    <interactant intactId="EBI-10174029">
        <id>A6NJ78-4</id>
        <label>METTL15</label>
    </interactant>
    <organismsDiffer>false</organismsDiffer>
    <experiments>3</experiments>
</comment>
<comment type="interaction">
    <interactant intactId="EBI-748515">
        <id>Q8IVS8</id>
    </interactant>
    <interactant intactId="EBI-8487781">
        <id>Q8N6F8</id>
        <label>METTL27</label>
    </interactant>
    <organismsDiffer>false</organismsDiffer>
    <experiments>3</experiments>
</comment>
<comment type="interaction">
    <interactant intactId="EBI-748515">
        <id>Q8IVS8</id>
    </interactant>
    <interactant intactId="EBI-1104552">
        <id>Q9NYP9</id>
        <label>MIS18A</label>
    </interactant>
    <organismsDiffer>false</organismsDiffer>
    <experiments>4</experiments>
</comment>
<comment type="interaction">
    <interactant intactId="EBI-748515">
        <id>Q8IVS8</id>
    </interactant>
    <interactant intactId="EBI-9675802">
        <id>Q6PF18</id>
        <label>MORN3</label>
    </interactant>
    <organismsDiffer>false</organismsDiffer>
    <experiments>3</experiments>
</comment>
<comment type="interaction">
    <interactant intactId="EBI-748515">
        <id>Q8IVS8</id>
    </interactant>
    <interactant intactId="EBI-10271199">
        <id>Q8NI38</id>
        <label>NFKBID</label>
    </interactant>
    <organismsDiffer>false</organismsDiffer>
    <experiments>3</experiments>
</comment>
<comment type="interaction">
    <interactant intactId="EBI-748515">
        <id>Q8IVS8</id>
    </interactant>
    <interactant intactId="EBI-17490746">
        <id>A8MTQ0</id>
        <label>NOTO</label>
    </interactant>
    <organismsDiffer>false</organismsDiffer>
    <experiments>3</experiments>
</comment>
<comment type="interaction">
    <interactant intactId="EBI-748515">
        <id>Q8IVS8</id>
    </interactant>
    <interactant intactId="EBI-742084">
        <id>P49902</id>
        <label>NT5C2</label>
    </interactant>
    <organismsDiffer>false</organismsDiffer>
    <experiments>3</experiments>
</comment>
<comment type="interaction">
    <interactant intactId="EBI-748515">
        <id>Q8IVS8</id>
    </interactant>
    <interactant intactId="EBI-357275">
        <id>Q99471</id>
        <label>PFDN5</label>
    </interactant>
    <organismsDiffer>false</organismsDiffer>
    <experiments>3</experiments>
</comment>
<comment type="interaction">
    <interactant intactId="EBI-748515">
        <id>Q8IVS8</id>
    </interactant>
    <interactant intactId="EBI-79165">
        <id>Q9NRD5</id>
        <label>PICK1</label>
    </interactant>
    <organismsDiffer>false</organismsDiffer>
    <experiments>3</experiments>
</comment>
<comment type="interaction">
    <interactant intactId="EBI-748515">
        <id>Q8IVS8</id>
    </interactant>
    <interactant intactId="EBI-2876622">
        <id>Q9UPG8</id>
        <label>PLAGL2</label>
    </interactant>
    <organismsDiffer>false</organismsDiffer>
    <experiments>3</experiments>
</comment>
<comment type="interaction">
    <interactant intactId="EBI-748515">
        <id>Q8IVS8</id>
    </interactant>
    <interactant intactId="EBI-12219503">
        <id>P01189</id>
        <label>POMC</label>
    </interactant>
    <organismsDiffer>false</organismsDiffer>
    <experiments>3</experiments>
</comment>
<comment type="interaction">
    <interactant intactId="EBI-748515">
        <id>Q8IVS8</id>
    </interactant>
    <interactant intactId="EBI-3957793">
        <id>Q9GZV8</id>
        <label>PRDM14</label>
    </interactant>
    <organismsDiffer>false</organismsDiffer>
    <experiments>3</experiments>
</comment>
<comment type="interaction">
    <interactant intactId="EBI-748515">
        <id>Q8IVS8</id>
    </interactant>
    <interactant intactId="EBI-12807240">
        <id>Q08623</id>
        <label>PUDP</label>
    </interactant>
    <organismsDiffer>false</organismsDiffer>
    <experiments>3</experiments>
</comment>
<comment type="interaction">
    <interactant intactId="EBI-748515">
        <id>Q8IVS8</id>
    </interactant>
    <interactant intactId="EBI-2340624">
        <id>Q9BYM8</id>
        <label>RBCK1</label>
    </interactant>
    <organismsDiffer>false</organismsDiffer>
    <experiments>3</experiments>
</comment>
<comment type="interaction">
    <interactant intactId="EBI-748515">
        <id>Q8IVS8</id>
    </interactant>
    <interactant intactId="EBI-740322">
        <id>Q93062</id>
        <label>RBPMS</label>
    </interactant>
    <organismsDiffer>false</organismsDiffer>
    <experiments>3</experiments>
</comment>
<comment type="interaction">
    <interactant intactId="EBI-748515">
        <id>Q8IVS8</id>
    </interactant>
    <interactant intactId="EBI-307352">
        <id>Q04864</id>
        <label>REL</label>
    </interactant>
    <organismsDiffer>false</organismsDiffer>
    <experiments>3</experiments>
</comment>
<comment type="interaction">
    <interactant intactId="EBI-748515">
        <id>Q8IVS8</id>
    </interactant>
    <interactant intactId="EBI-10829018">
        <id>Q04864-2</id>
        <label>REL</label>
    </interactant>
    <organismsDiffer>false</organismsDiffer>
    <experiments>3</experiments>
</comment>
<comment type="interaction">
    <interactant intactId="EBI-748515">
        <id>Q8IVS8</id>
    </interactant>
    <interactant intactId="EBI-3957636">
        <id>Q8IYX7</id>
        <label>SAXO1</label>
    </interactant>
    <organismsDiffer>false</organismsDiffer>
    <experiments>3</experiments>
</comment>
<comment type="interaction">
    <interactant intactId="EBI-748515">
        <id>Q8IVS8</id>
    </interactant>
    <interactant intactId="EBI-748601">
        <id>Q9UHV2</id>
        <label>SERTAD1</label>
    </interactant>
    <organismsDiffer>false</organismsDiffer>
    <experiments>3</experiments>
</comment>
<comment type="interaction">
    <interactant intactId="EBI-748515">
        <id>Q8IVS8</id>
    </interactant>
    <interactant intactId="EBI-12275818">
        <id>Q53HV7-2</id>
        <label>SMUG1</label>
    </interactant>
    <organismsDiffer>false</organismsDiffer>
    <experiments>3</experiments>
</comment>
<comment type="interaction">
    <interactant intactId="EBI-748515">
        <id>Q8IVS8</id>
    </interactant>
    <interactant intactId="EBI-747719">
        <id>Q96H20</id>
        <label>SNF8</label>
    </interactant>
    <organismsDiffer>false</organismsDiffer>
    <experiments>5</experiments>
</comment>
<comment type="interaction">
    <interactant intactId="EBI-748515">
        <id>Q8IVS8</id>
    </interactant>
    <interactant intactId="EBI-11959123">
        <id>Q99932-2</id>
        <label>SPAG8</label>
    </interactant>
    <organismsDiffer>false</organismsDiffer>
    <experiments>3</experiments>
</comment>
<comment type="interaction">
    <interactant intactId="EBI-748515">
        <id>Q8IVS8</id>
    </interactant>
    <interactant intactId="EBI-5235340">
        <id>Q7Z699</id>
        <label>SPRED1</label>
    </interactant>
    <organismsDiffer>false</organismsDiffer>
    <experiments>3</experiments>
</comment>
<comment type="interaction">
    <interactant intactId="EBI-748515">
        <id>Q8IVS8</id>
    </interactant>
    <interactant intactId="EBI-719493">
        <id>P14373</id>
        <label>TRIM27</label>
    </interactant>
    <organismsDiffer>false</organismsDiffer>
    <experiments>3</experiments>
</comment>
<comment type="interaction">
    <interactant intactId="EBI-748515">
        <id>Q8IVS8</id>
    </interactant>
    <interactant intactId="EBI-5235829">
        <id>Q8IWZ5</id>
        <label>TRIM42</label>
    </interactant>
    <organismsDiffer>false</organismsDiffer>
    <experiments>3</experiments>
</comment>
<comment type="interaction">
    <interactant intactId="EBI-748515">
        <id>Q8IVS8</id>
    </interactant>
    <interactant intactId="EBI-358993">
        <id>Q15645</id>
        <label>TRIP13</label>
    </interactant>
    <organismsDiffer>false</organismsDiffer>
    <experiments>9</experiments>
</comment>
<comment type="interaction">
    <interactant intactId="EBI-748515">
        <id>Q8IVS8</id>
    </interactant>
    <interactant intactId="EBI-1052544">
        <id>Q9UGJ1</id>
        <label>TUBGCP4</label>
    </interactant>
    <organismsDiffer>false</organismsDiffer>
    <experiments>3</experiments>
</comment>
<comment type="interaction">
    <interactant intactId="EBI-748515">
        <id>Q8IVS8</id>
    </interactant>
    <interactant intactId="EBI-12068150">
        <id>Q6NVU6</id>
        <label>UFSP1</label>
    </interactant>
    <organismsDiffer>false</organismsDiffer>
    <experiments>3</experiments>
</comment>
<comment type="interaction">
    <interactant intactId="EBI-748515">
        <id>Q8IVS8</id>
    </interactant>
    <interactant intactId="EBI-11419867">
        <id>Q8TF47</id>
        <label>ZFP90</label>
    </interactant>
    <organismsDiffer>false</organismsDiffer>
    <experiments>3</experiments>
</comment>
<comment type="interaction">
    <interactant intactId="EBI-748515">
        <id>Q8IVS8</id>
    </interactant>
    <interactant intactId="EBI-746479">
        <id>O60844</id>
        <label>ZG16</label>
    </interactant>
    <organismsDiffer>false</organismsDiffer>
    <experiments>3</experiments>
</comment>
<comment type="interaction">
    <interactant intactId="EBI-748515">
        <id>Q8IVS8</id>
    </interactant>
    <interactant intactId="EBI-11962760">
        <id>Q9NZV7</id>
        <label>ZIM2</label>
    </interactant>
    <organismsDiffer>false</organismsDiffer>
    <experiments>3</experiments>
</comment>
<comment type="interaction">
    <interactant intactId="EBI-748515">
        <id>Q8IVS8</id>
    </interactant>
    <interactant intactId="EBI-4395669">
        <id>Q6ZNG0</id>
        <label>ZNF620</label>
    </interactant>
    <organismsDiffer>false</organismsDiffer>
    <experiments>3</experiments>
</comment>
<comment type="interaction">
    <interactant intactId="EBI-748515">
        <id>Q8IVS8</id>
    </interactant>
    <interactant intactId="EBI-4395732">
        <id>P0C7X2</id>
        <label>ZNF688</label>
    </interactant>
    <organismsDiffer>false</organismsDiffer>
    <experiments>3</experiments>
</comment>
<comment type="subcellular location">
    <molecule>Isoform 1</molecule>
    <subcellularLocation>
        <location evidence="1">Cytoplasm</location>
    </subcellularLocation>
</comment>
<comment type="subcellular location">
    <molecule>Isoform 2</molecule>
    <subcellularLocation>
        <location>Cytoplasm</location>
    </subcellularLocation>
    <subcellularLocation>
        <location evidence="1">Mitochondrion</location>
    </subcellularLocation>
</comment>
<comment type="alternative products">
    <event type="alternative splicing"/>
    <isoform>
        <id>Q8IVS8-1</id>
        <name>1</name>
        <name evidence="6">Glycerate kinase 1</name>
        <name evidence="6">GLYCTK1</name>
        <sequence type="displayed"/>
    </isoform>
    <isoform>
        <id>Q8IVS8-2</id>
        <name>2</name>
        <name evidence="6">Glycerate kinase 2</name>
        <name evidence="6">GLYCTK2</name>
        <sequence type="described" ref="VSP_025360 VSP_025362"/>
    </isoform>
    <isoform>
        <id>Q8IVS8-3</id>
        <name>3</name>
        <sequence type="described" ref="VSP_025358"/>
    </isoform>
    <isoform>
        <id>Q8IVS8-4</id>
        <name>4</name>
        <sequence type="described" ref="VSP_025363 VSP_025365"/>
    </isoform>
    <isoform>
        <id>Q8IVS8-5</id>
        <name>5</name>
        <sequence type="described" ref="VSP_025357 VSP_025364 VSP_025365"/>
    </isoform>
    <isoform>
        <id>Q8IVS8-6</id>
        <name>6</name>
        <sequence type="described" ref="VSP_025356"/>
    </isoform>
    <isoform>
        <id>Q8IVS8-7</id>
        <name>7</name>
        <sequence type="described" ref="VSP_025359 VSP_025361"/>
    </isoform>
</comment>
<comment type="tissue specificity">
    <text evidence="1">Widely expressed.</text>
</comment>
<comment type="disease" evidence="2">
    <disease id="DI-03131">
        <name>D-glyceric aciduria</name>
        <acronym>D-GA</acronym>
        <description>A rare metabolic disease characterized by chronic metabolic acidosis and a highly variable clinical phenotype. Clinical features range from an encephalopathic presentation with seizures, microcephaly, severe intellectual disability and early death, to milder manifestations with only speech delay or even normal development.</description>
        <dbReference type="MIM" id="220120"/>
    </disease>
    <text>The disease is caused by variants affecting the gene represented in this entry.</text>
</comment>
<comment type="similarity">
    <text evidence="9">Belongs to the glycerate kinase type-2 family.</text>
</comment>
<comment type="sequence caution" evidence="9">
    <conflict type="frameshift">
        <sequence resource="EMBL-CDS" id="AAH36862"/>
    </conflict>
</comment>
<sequence>MAAALQVLPRLARAPLHPLLWRGSVARLASSMALAEQARQLFESAVGAVLPGPMLHRALSLDPGGRQLKVRDRNFQLRQNLYLVGFGKAVLGMAAAAEELLGQHLVQGVISVPKGIRAAMERAGKQEMLLKPHSRVQVFEGAEDNLPDRDALRAALAIQQLAEGLTADDLLLVLISGGGSALLPAPIPPVTLEEKQTLTRLLAARGATIQELNTIRKALSQLKGGGLAQAAYPAQVVSLILSDVVGDPVEVIASGPTVASSHNVQDCLHILNRYGLRAALPRSVKTVLSRADSDPHGPHTCGHVLNVIIGSNVLALAEAQRQAEALGYQAVVLSAAMQGDVKSMAQFYGLLAHVARTRLTPSMAGASVEEDAQLHELAAELQIPDLQLEEALETMAWGRGPVCLLAGGEPTVQLQGSGRGGRNQELALRVGAELRRWPLGPIDVLFLSGGTDGQDGPTEAAGAWVTPELASQAAAEGLDIATFLAHNDSHTFFCCLQGGAHLLHTGMTGTNVMDTHLLFLRPR</sequence>
<accession>Q8IVS8</accession>
<accession>Q0P630</accession>
<accession>Q2EZ43</accession>
<accession>Q6Y2K6</accession>
<accession>Q7Z6G5</accession>
<accession>Q86YR8</accession>
<accession>Q8TED2</accession>
<accession>Q8WTY2</accession>
<reference key="1">
    <citation type="journal article" date="2006" name="DNA Seq.">
        <title>Isolation and characterization of the human D-glyceric acidemia related glycerate kinase gene GLYCTK1 and its alternatively splicing variant GLYCTK2.</title>
        <authorList>
            <person name="Guo J.-H."/>
            <person name="Hexige S."/>
            <person name="Chen L."/>
            <person name="Zhou G.-J."/>
            <person name="Wang X."/>
            <person name="Jiang J.-M."/>
            <person name="Kong Y.-H."/>
            <person name="Ji G.-Q."/>
            <person name="Wu C.-Q."/>
            <person name="Zhao S.-Y."/>
            <person name="Yu L."/>
        </authorList>
    </citation>
    <scope>NUCLEOTIDE SEQUENCE [MRNA] (ISOFORMS 1 AND 2)</scope>
    <scope>SUBCELLULAR LOCATION(ISOFORMS 1 AND 2)</scope>
    <scope>CATALYTIC ACTIVITY</scope>
    <scope>TISSUE SPECIFICITY</scope>
    <source>
        <tissue>Liver</tissue>
    </source>
</reference>
<reference key="2">
    <citation type="submission" date="2002-11" db="EMBL/GenBank/DDBJ databases">
        <title>Cloning of HCG9886S gene and identification of a novel domain.</title>
        <authorList>
            <person name="Guo J.H."/>
        </authorList>
    </citation>
    <scope>NUCLEOTIDE SEQUENCE [LARGE SCALE MRNA] (ISOFORM 7)</scope>
    <source>
        <tissue>Lung</tissue>
    </source>
</reference>
<reference key="3">
    <citation type="journal article" date="2004" name="Proc. Natl. Acad. Sci. U.S.A.">
        <title>Large-scale cDNA transfection screening for genes related to cancer development and progression.</title>
        <authorList>
            <person name="Wan D."/>
            <person name="Gong Y."/>
            <person name="Qin W."/>
            <person name="Zhang P."/>
            <person name="Li J."/>
            <person name="Wei L."/>
            <person name="Zhou X."/>
            <person name="Li H."/>
            <person name="Qiu X."/>
            <person name="Zhong F."/>
            <person name="He L."/>
            <person name="Yu J."/>
            <person name="Yao G."/>
            <person name="Jiang H."/>
            <person name="Qian L."/>
            <person name="Yu Y."/>
            <person name="Shu H."/>
            <person name="Chen X."/>
            <person name="Xu H."/>
            <person name="Guo M."/>
            <person name="Pan Z."/>
            <person name="Chen Y."/>
            <person name="Ge C."/>
            <person name="Yang S."/>
            <person name="Gu J."/>
        </authorList>
    </citation>
    <scope>NUCLEOTIDE SEQUENCE [LARGE SCALE MRNA] (ISOFORM 6)</scope>
</reference>
<reference key="4">
    <citation type="journal article" date="2004" name="Nat. Genet.">
        <title>Complete sequencing and characterization of 21,243 full-length human cDNAs.</title>
        <authorList>
            <person name="Ota T."/>
            <person name="Suzuki Y."/>
            <person name="Nishikawa T."/>
            <person name="Otsuki T."/>
            <person name="Sugiyama T."/>
            <person name="Irie R."/>
            <person name="Wakamatsu A."/>
            <person name="Hayashi K."/>
            <person name="Sato H."/>
            <person name="Nagai K."/>
            <person name="Kimura K."/>
            <person name="Makita H."/>
            <person name="Sekine M."/>
            <person name="Obayashi M."/>
            <person name="Nishi T."/>
            <person name="Shibahara T."/>
            <person name="Tanaka T."/>
            <person name="Ishii S."/>
            <person name="Yamamoto J."/>
            <person name="Saito K."/>
            <person name="Kawai Y."/>
            <person name="Isono Y."/>
            <person name="Nakamura Y."/>
            <person name="Nagahari K."/>
            <person name="Murakami K."/>
            <person name="Yasuda T."/>
            <person name="Iwayanagi T."/>
            <person name="Wagatsuma M."/>
            <person name="Shiratori A."/>
            <person name="Sudo H."/>
            <person name="Hosoiri T."/>
            <person name="Kaku Y."/>
            <person name="Kodaira H."/>
            <person name="Kondo H."/>
            <person name="Sugawara M."/>
            <person name="Takahashi M."/>
            <person name="Kanda K."/>
            <person name="Yokoi T."/>
            <person name="Furuya T."/>
            <person name="Kikkawa E."/>
            <person name="Omura Y."/>
            <person name="Abe K."/>
            <person name="Kamihara K."/>
            <person name="Katsuta N."/>
            <person name="Sato K."/>
            <person name="Tanikawa M."/>
            <person name="Yamazaki M."/>
            <person name="Ninomiya K."/>
            <person name="Ishibashi T."/>
            <person name="Yamashita H."/>
            <person name="Murakawa K."/>
            <person name="Fujimori K."/>
            <person name="Tanai H."/>
            <person name="Kimata M."/>
            <person name="Watanabe M."/>
            <person name="Hiraoka S."/>
            <person name="Chiba Y."/>
            <person name="Ishida S."/>
            <person name="Ono Y."/>
            <person name="Takiguchi S."/>
            <person name="Watanabe S."/>
            <person name="Yosida M."/>
            <person name="Hotuta T."/>
            <person name="Kusano J."/>
            <person name="Kanehori K."/>
            <person name="Takahashi-Fujii A."/>
            <person name="Hara H."/>
            <person name="Tanase T.-O."/>
            <person name="Nomura Y."/>
            <person name="Togiya S."/>
            <person name="Komai F."/>
            <person name="Hara R."/>
            <person name="Takeuchi K."/>
            <person name="Arita M."/>
            <person name="Imose N."/>
            <person name="Musashino K."/>
            <person name="Yuuki H."/>
            <person name="Oshima A."/>
            <person name="Sasaki N."/>
            <person name="Aotsuka S."/>
            <person name="Yoshikawa Y."/>
            <person name="Matsunawa H."/>
            <person name="Ichihara T."/>
            <person name="Shiohata N."/>
            <person name="Sano S."/>
            <person name="Moriya S."/>
            <person name="Momiyama H."/>
            <person name="Satoh N."/>
            <person name="Takami S."/>
            <person name="Terashima Y."/>
            <person name="Suzuki O."/>
            <person name="Nakagawa S."/>
            <person name="Senoh A."/>
            <person name="Mizoguchi H."/>
            <person name="Goto Y."/>
            <person name="Shimizu F."/>
            <person name="Wakebe H."/>
            <person name="Hishigaki H."/>
            <person name="Watanabe T."/>
            <person name="Sugiyama A."/>
            <person name="Takemoto M."/>
            <person name="Kawakami B."/>
            <person name="Yamazaki M."/>
            <person name="Watanabe K."/>
            <person name="Kumagai A."/>
            <person name="Itakura S."/>
            <person name="Fukuzumi Y."/>
            <person name="Fujimori Y."/>
            <person name="Komiyama M."/>
            <person name="Tashiro H."/>
            <person name="Tanigami A."/>
            <person name="Fujiwara T."/>
            <person name="Ono T."/>
            <person name="Yamada K."/>
            <person name="Fujii Y."/>
            <person name="Ozaki K."/>
            <person name="Hirao M."/>
            <person name="Ohmori Y."/>
            <person name="Kawabata A."/>
            <person name="Hikiji T."/>
            <person name="Kobatake N."/>
            <person name="Inagaki H."/>
            <person name="Ikema Y."/>
            <person name="Okamoto S."/>
            <person name="Okitani R."/>
            <person name="Kawakami T."/>
            <person name="Noguchi S."/>
            <person name="Itoh T."/>
            <person name="Shigeta K."/>
            <person name="Senba T."/>
            <person name="Matsumura K."/>
            <person name="Nakajima Y."/>
            <person name="Mizuno T."/>
            <person name="Morinaga M."/>
            <person name="Sasaki M."/>
            <person name="Togashi T."/>
            <person name="Oyama M."/>
            <person name="Hata H."/>
            <person name="Watanabe M."/>
            <person name="Komatsu T."/>
            <person name="Mizushima-Sugano J."/>
            <person name="Satoh T."/>
            <person name="Shirai Y."/>
            <person name="Takahashi Y."/>
            <person name="Nakagawa K."/>
            <person name="Okumura K."/>
            <person name="Nagase T."/>
            <person name="Nomura N."/>
            <person name="Kikuchi H."/>
            <person name="Masuho Y."/>
            <person name="Yamashita R."/>
            <person name="Nakai K."/>
            <person name="Yada T."/>
            <person name="Nakamura Y."/>
            <person name="Ohara O."/>
            <person name="Isogai T."/>
            <person name="Sugano S."/>
        </authorList>
    </citation>
    <scope>NUCLEOTIDE SEQUENCE [LARGE SCALE MRNA] (ISOFORM 5)</scope>
</reference>
<reference key="5">
    <citation type="submission" date="2006-01" db="EMBL/GenBank/DDBJ databases">
        <title>Screening and cloning of HBeAg binding protein 4.</title>
        <authorList>
            <person name="Zhang J.-K."/>
            <person name="Cheng J."/>
            <person name="Lan X.-Y."/>
            <person name="Guo J."/>
            <person name="Zhang L.-Y."/>
        </authorList>
    </citation>
    <scope>NUCLEOTIDE SEQUENCE [LARGE SCALE MRNA] (ISOFORMS 4 AND 6)</scope>
</reference>
<reference key="6">
    <citation type="journal article" date="2004" name="Genome Res.">
        <title>The status, quality, and expansion of the NIH full-length cDNA project: the Mammalian Gene Collection (MGC).</title>
        <authorList>
            <consortium name="The MGC Project Team"/>
        </authorList>
    </citation>
    <scope>NUCLEOTIDE SEQUENCE [LARGE SCALE MRNA] (ISOFORMS 1 AND 3)</scope>
    <source>
        <tissue>Lung</tissue>
        <tissue>Skin</tissue>
    </source>
</reference>
<reference key="7">
    <citation type="journal article" date="2010" name="Hum. Mutat.">
        <title>D-glyceric aciduria is caused by genetic deficiency of D-glycerate kinase (GLYCTK).</title>
        <authorList>
            <person name="Sass J.O."/>
            <person name="Fischer K."/>
            <person name="Wang R."/>
            <person name="Christensen E."/>
            <person name="Scholl-Burgi S."/>
            <person name="Chang R."/>
            <person name="Kapelari K."/>
            <person name="Walter M."/>
        </authorList>
    </citation>
    <scope>KINETIC PARAMETERS</scope>
    <scope>CATALYTIC ACTIVITY</scope>
    <scope>VARIANT D-GA CYS-493</scope>
    <scope>CHARACTERIZATION OF VARIANT D-GA CYS-493</scope>
</reference>
<reference key="8">
    <citation type="journal article" date="2014" name="J. Proteomics">
        <title>An enzyme assisted RP-RPLC approach for in-depth analysis of human liver phosphoproteome.</title>
        <authorList>
            <person name="Bian Y."/>
            <person name="Song C."/>
            <person name="Cheng K."/>
            <person name="Dong M."/>
            <person name="Wang F."/>
            <person name="Huang J."/>
            <person name="Sun D."/>
            <person name="Wang L."/>
            <person name="Ye M."/>
            <person name="Zou H."/>
        </authorList>
    </citation>
    <scope>PHOSPHORYLATION [LARGE SCALE ANALYSIS] AT SER-60</scope>
    <scope>IDENTIFICATION BY MASS SPECTROMETRY [LARGE SCALE ANALYSIS]</scope>
    <source>
        <tissue>Liver</tissue>
    </source>
</reference>
<feature type="chain" id="PRO_0000287192" description="Glycerate kinase">
    <location>
        <begin position="1"/>
        <end position="523"/>
    </location>
</feature>
<feature type="modified residue" description="Phosphoserine" evidence="10">
    <location>
        <position position="60"/>
    </location>
</feature>
<feature type="splice variant" id="VSP_025356" description="In isoform 6." evidence="5 8">
    <location>
        <begin position="1"/>
        <end position="336"/>
    </location>
</feature>
<feature type="splice variant" id="VSP_025357" description="In isoform 5." evidence="3">
    <location>
        <begin position="1"/>
        <end position="127"/>
    </location>
</feature>
<feature type="splice variant" id="VSP_025358" description="In isoform 3." evidence="4">
    <location>
        <begin position="119"/>
        <end position="184"/>
    </location>
</feature>
<feature type="splice variant" id="VSP_025359" description="In isoform 7." evidence="7">
    <original>GGSALLPAPIPPVTLEEKQTLTRLLAAR</original>
    <variation>WGTPAAHRDDRYQCHGHPPLVPAASVMA</variation>
    <location>
        <begin position="178"/>
        <end position="205"/>
    </location>
</feature>
<feature type="splice variant" id="VSP_025360" description="In isoform 2." evidence="6">
    <original>GSALLPAPIPPVTLEEKQTLTRLLAARGATIQELNTIRKALSQLKGGGLAQAAYPA</original>
    <variation>EPHPVRCGGGPCGGDCQWPHRGQFPQCARLPAYPQSLRPPCSPATFCEDCAVSGRL</variation>
    <location>
        <begin position="179"/>
        <end position="234"/>
    </location>
</feature>
<feature type="splice variant" id="VSP_025361" description="In isoform 7." evidence="7">
    <location>
        <begin position="206"/>
        <end position="523"/>
    </location>
</feature>
<feature type="splice variant" id="VSP_025362" description="In isoform 2." evidence="6">
    <location>
        <begin position="235"/>
        <end position="523"/>
    </location>
</feature>
<feature type="splice variant" id="VSP_025363" description="In isoform 4." evidence="8">
    <original>DVKSMAQFYGLLAHVARTRLTPSMAGAS</original>
    <variation>WGTPAAHRDDRYQCHGHPPLVPAASVMA</variation>
    <location>
        <begin position="340"/>
        <end position="367"/>
    </location>
</feature>
<feature type="splice variant" id="VSP_025364" description="In isoform 5." evidence="3">
    <original>DVKSMAQFYGLLAHVARTRLTPSMAGAS</original>
    <variation>WGTPAAHRDDRYQCHGHPPIVPAASVMA</variation>
    <location>
        <begin position="340"/>
        <end position="367"/>
    </location>
</feature>
<feature type="splice variant" id="VSP_025365" description="In isoform 4 and isoform 5." evidence="3 8">
    <location>
        <begin position="368"/>
        <end position="523"/>
    </location>
</feature>
<feature type="sequence variant" id="VAR_061205" description="In dbSNP:rs34502608.">
    <original>R</original>
    <variation>C</variation>
    <location>
        <position position="27"/>
    </location>
</feature>
<feature type="sequence variant" id="VAR_032285" description="In dbSNP:rs35130772.">
    <original>L</original>
    <variation>V</variation>
    <location>
        <position position="170"/>
    </location>
</feature>
<feature type="sequence variant" id="VAR_032286" description="In dbSNP:rs9813489.">
    <original>T</original>
    <variation>I</variation>
    <location>
        <position position="394"/>
    </location>
</feature>
<feature type="sequence variant" id="VAR_065909" description="In D-GA; the mutant protein is not expressed and has no enzymatic activity; dbSNP:rs121909448." evidence="2">
    <original>F</original>
    <variation>C</variation>
    <location>
        <position position="493"/>
    </location>
</feature>
<feature type="sequence conflict" description="In Ref. 1; AAP51132." evidence="9" ref="1">
    <original>D</original>
    <variation>Y</variation>
    <location>
        <position position="144"/>
    </location>
</feature>
<feature type="sequence conflict" description="In Ref. 4; BAB85018." evidence="9" ref="4">
    <original>V</original>
    <variation>E</variation>
    <location>
        <position position="245"/>
    </location>
</feature>
<organism>
    <name type="scientific">Homo sapiens</name>
    <name type="common">Human</name>
    <dbReference type="NCBI Taxonomy" id="9606"/>
    <lineage>
        <taxon>Eukaryota</taxon>
        <taxon>Metazoa</taxon>
        <taxon>Chordata</taxon>
        <taxon>Craniata</taxon>
        <taxon>Vertebrata</taxon>
        <taxon>Euteleostomi</taxon>
        <taxon>Mammalia</taxon>
        <taxon>Eutheria</taxon>
        <taxon>Euarchontoglires</taxon>
        <taxon>Primates</taxon>
        <taxon>Haplorrhini</taxon>
        <taxon>Catarrhini</taxon>
        <taxon>Hominidae</taxon>
        <taxon>Homo</taxon>
    </lineage>
</organism>
<gene>
    <name type="primary">GLYCTK</name>
    <name type="synonym">HBEBP4</name>
    <name type="ORF">LP5910</name>
</gene>
<dbReference type="EC" id="2.7.1.31" evidence="1 2"/>
<dbReference type="EMBL" id="AY295075">
    <property type="protein sequence ID" value="AAP51132.1"/>
    <property type="molecule type" value="mRNA"/>
</dbReference>
<dbReference type="EMBL" id="AF448855">
    <property type="protein sequence ID" value="AAP41923.1"/>
    <property type="molecule type" value="mRNA"/>
</dbReference>
<dbReference type="EMBL" id="AY172690">
    <property type="protein sequence ID" value="AAO17719.1"/>
    <property type="molecule type" value="mRNA"/>
</dbReference>
<dbReference type="EMBL" id="AY189286">
    <property type="protein sequence ID" value="AAO86730.1"/>
    <property type="molecule type" value="mRNA"/>
</dbReference>
<dbReference type="EMBL" id="AK074215">
    <property type="protein sequence ID" value="BAB85018.1"/>
    <property type="molecule type" value="mRNA"/>
</dbReference>
<dbReference type="EMBL" id="AY134474">
    <property type="protein sequence ID" value="AAM95456.1"/>
    <property type="molecule type" value="mRNA"/>
</dbReference>
<dbReference type="EMBL" id="DQ352863">
    <property type="protein sequence ID" value="ABD22985.1"/>
    <property type="molecule type" value="mRNA"/>
</dbReference>
<dbReference type="EMBL" id="BC021896">
    <property type="protein sequence ID" value="AAH21896.1"/>
    <property type="molecule type" value="mRNA"/>
</dbReference>
<dbReference type="EMBL" id="BC036862">
    <property type="protein sequence ID" value="AAH36862.1"/>
    <property type="status" value="ALT_FRAME"/>
    <property type="molecule type" value="mRNA"/>
</dbReference>
<dbReference type="EMBL" id="BC042151">
    <property type="protein sequence ID" value="AAH42151.1"/>
    <property type="molecule type" value="mRNA"/>
</dbReference>
<dbReference type="CCDS" id="CCDS2852.1">
    <molecule id="Q8IVS8-1"/>
</dbReference>
<dbReference type="CCDS" id="CCDS46841.1">
    <molecule id="Q8IVS8-2"/>
</dbReference>
<dbReference type="RefSeq" id="NP_001138423.1">
    <molecule id="Q8IVS8-2"/>
    <property type="nucleotide sequence ID" value="NM_001144951.2"/>
</dbReference>
<dbReference type="RefSeq" id="NP_660305.2">
    <molecule id="Q8IVS8-1"/>
    <property type="nucleotide sequence ID" value="NM_145262.3"/>
</dbReference>
<dbReference type="RefSeq" id="XP_024309119.1">
    <molecule id="Q8IVS8-1"/>
    <property type="nucleotide sequence ID" value="XM_024453351.2"/>
</dbReference>
<dbReference type="RefSeq" id="XP_024309120.1">
    <molecule id="Q8IVS8-2"/>
    <property type="nucleotide sequence ID" value="XM_024453352.2"/>
</dbReference>
<dbReference type="RefSeq" id="XP_047303421.1">
    <molecule id="Q8IVS8-4"/>
    <property type="nucleotide sequence ID" value="XM_047447465.1"/>
</dbReference>
<dbReference type="RefSeq" id="XP_047303422.1">
    <molecule id="Q8IVS8-4"/>
    <property type="nucleotide sequence ID" value="XM_047447466.1"/>
</dbReference>
<dbReference type="RefSeq" id="XP_054201255.1">
    <molecule id="Q8IVS8-1"/>
    <property type="nucleotide sequence ID" value="XM_054345280.1"/>
</dbReference>
<dbReference type="RefSeq" id="XP_054201256.1">
    <molecule id="Q8IVS8-4"/>
    <property type="nucleotide sequence ID" value="XM_054345281.1"/>
</dbReference>
<dbReference type="SMR" id="Q8IVS8"/>
<dbReference type="BioGRID" id="126307">
    <property type="interactions" value="61"/>
</dbReference>
<dbReference type="FunCoup" id="Q8IVS8">
    <property type="interactions" value="804"/>
</dbReference>
<dbReference type="IntAct" id="Q8IVS8">
    <property type="interactions" value="59"/>
</dbReference>
<dbReference type="MINT" id="Q8IVS8"/>
<dbReference type="STRING" id="9606.ENSP00000389175"/>
<dbReference type="GlyGen" id="Q8IVS8">
    <property type="glycosylation" value="1 site"/>
</dbReference>
<dbReference type="iPTMnet" id="Q8IVS8"/>
<dbReference type="PhosphoSitePlus" id="Q8IVS8"/>
<dbReference type="BioMuta" id="GLYCTK"/>
<dbReference type="DMDM" id="74728080"/>
<dbReference type="jPOST" id="Q8IVS8"/>
<dbReference type="MassIVE" id="Q8IVS8"/>
<dbReference type="PaxDb" id="9606-ENSP00000389175"/>
<dbReference type="PeptideAtlas" id="Q8IVS8"/>
<dbReference type="ProteomicsDB" id="70758">
    <molecule id="Q8IVS8-1"/>
</dbReference>
<dbReference type="ProteomicsDB" id="70759">
    <molecule id="Q8IVS8-2"/>
</dbReference>
<dbReference type="ProteomicsDB" id="70760">
    <molecule id="Q8IVS8-3"/>
</dbReference>
<dbReference type="ProteomicsDB" id="70761">
    <molecule id="Q8IVS8-4"/>
</dbReference>
<dbReference type="ProteomicsDB" id="70762">
    <molecule id="Q8IVS8-5"/>
</dbReference>
<dbReference type="ProteomicsDB" id="70763">
    <molecule id="Q8IVS8-6"/>
</dbReference>
<dbReference type="ProteomicsDB" id="70764">
    <molecule id="Q8IVS8-7"/>
</dbReference>
<dbReference type="Antibodypedia" id="1847">
    <property type="antibodies" value="270 antibodies from 30 providers"/>
</dbReference>
<dbReference type="DNASU" id="132158"/>
<dbReference type="Ensembl" id="ENST00000305690.12">
    <molecule id="Q8IVS8-2"/>
    <property type="protein sequence ID" value="ENSP00000301965.9"/>
    <property type="gene ID" value="ENSG00000168237.18"/>
</dbReference>
<dbReference type="Ensembl" id="ENST00000436784.7">
    <molecule id="Q8IVS8-1"/>
    <property type="protein sequence ID" value="ENSP00000389175.2"/>
    <property type="gene ID" value="ENSG00000168237.18"/>
</dbReference>
<dbReference type="Ensembl" id="ENST00000473032.5">
    <molecule id="Q8IVS8-7"/>
    <property type="protein sequence ID" value="ENSP00000418951.1"/>
    <property type="gene ID" value="ENSG00000168237.18"/>
</dbReference>
<dbReference type="Ensembl" id="ENST00000477382.1">
    <molecule id="Q8IVS8-2"/>
    <property type="protein sequence ID" value="ENSP00000419008.1"/>
    <property type="gene ID" value="ENSG00000168237.18"/>
</dbReference>
<dbReference type="GeneID" id="132158"/>
<dbReference type="KEGG" id="hsa:132158"/>
<dbReference type="MANE-Select" id="ENST00000436784.7">
    <property type="protein sequence ID" value="ENSP00000389175.2"/>
    <property type="RefSeq nucleotide sequence ID" value="NM_145262.4"/>
    <property type="RefSeq protein sequence ID" value="NP_660305.2"/>
</dbReference>
<dbReference type="UCSC" id="uc003ddo.4">
    <molecule id="Q8IVS8-1"/>
    <property type="organism name" value="human"/>
</dbReference>
<dbReference type="AGR" id="HGNC:24247"/>
<dbReference type="CTD" id="132158"/>
<dbReference type="DisGeNET" id="132158"/>
<dbReference type="GeneCards" id="GLYCTK"/>
<dbReference type="HGNC" id="HGNC:24247">
    <property type="gene designation" value="GLYCTK"/>
</dbReference>
<dbReference type="HPA" id="ENSG00000168237">
    <property type="expression patterns" value="Tissue enriched (liver)"/>
</dbReference>
<dbReference type="MalaCards" id="GLYCTK"/>
<dbReference type="MIM" id="220120">
    <property type="type" value="phenotype"/>
</dbReference>
<dbReference type="MIM" id="610516">
    <property type="type" value="gene"/>
</dbReference>
<dbReference type="neXtProt" id="NX_Q8IVS8"/>
<dbReference type="OpenTargets" id="ENSG00000168237"/>
<dbReference type="Orphanet" id="941">
    <property type="disease" value="D-glyceric aciduria"/>
</dbReference>
<dbReference type="PharmGKB" id="PA162389865"/>
<dbReference type="VEuPathDB" id="HostDB:ENSG00000168237"/>
<dbReference type="eggNOG" id="KOG3935">
    <property type="taxonomic scope" value="Eukaryota"/>
</dbReference>
<dbReference type="GeneTree" id="ENSGT00390000014365"/>
<dbReference type="HOGENOM" id="CLU_112512_0_0_1"/>
<dbReference type="InParanoid" id="Q8IVS8"/>
<dbReference type="OMA" id="GKAAWRM"/>
<dbReference type="OrthoDB" id="44918at2759"/>
<dbReference type="PAN-GO" id="Q8IVS8">
    <property type="GO annotations" value="3 GO annotations based on evolutionary models"/>
</dbReference>
<dbReference type="PhylomeDB" id="Q8IVS8"/>
<dbReference type="TreeFam" id="TF313770"/>
<dbReference type="BRENDA" id="2.7.1.31">
    <property type="organism ID" value="2681"/>
</dbReference>
<dbReference type="PathwayCommons" id="Q8IVS8"/>
<dbReference type="Reactome" id="R-HSA-70350">
    <property type="pathway name" value="Fructose catabolism"/>
</dbReference>
<dbReference type="SABIO-RK" id="Q8IVS8"/>
<dbReference type="SignaLink" id="Q8IVS8"/>
<dbReference type="BioGRID-ORCS" id="132158">
    <property type="hits" value="14 hits in 1158 CRISPR screens"/>
</dbReference>
<dbReference type="ChiTaRS" id="GLYCTK">
    <property type="organism name" value="human"/>
</dbReference>
<dbReference type="GenomeRNAi" id="132158"/>
<dbReference type="Pharos" id="Q8IVS8">
    <property type="development level" value="Tbio"/>
</dbReference>
<dbReference type="PRO" id="PR:Q8IVS8"/>
<dbReference type="Proteomes" id="UP000005640">
    <property type="component" value="Chromosome 3"/>
</dbReference>
<dbReference type="RNAct" id="Q8IVS8">
    <property type="molecule type" value="protein"/>
</dbReference>
<dbReference type="Bgee" id="ENSG00000168237">
    <property type="expression patterns" value="Expressed in right lobe of liver and 110 other cell types or tissues"/>
</dbReference>
<dbReference type="ExpressionAtlas" id="Q8IVS8">
    <property type="expression patterns" value="baseline and differential"/>
</dbReference>
<dbReference type="GO" id="GO:0005737">
    <property type="term" value="C:cytoplasm"/>
    <property type="evidence" value="ECO:0000314"/>
    <property type="project" value="UniProtKB"/>
</dbReference>
<dbReference type="GO" id="GO:0005829">
    <property type="term" value="C:cytosol"/>
    <property type="evidence" value="ECO:0000314"/>
    <property type="project" value="HPA"/>
</dbReference>
<dbReference type="GO" id="GO:0005794">
    <property type="term" value="C:Golgi apparatus"/>
    <property type="evidence" value="ECO:0000314"/>
    <property type="project" value="HPA"/>
</dbReference>
<dbReference type="GO" id="GO:0005739">
    <property type="term" value="C:mitochondrion"/>
    <property type="evidence" value="ECO:0006056"/>
    <property type="project" value="FlyBase"/>
</dbReference>
<dbReference type="GO" id="GO:0005524">
    <property type="term" value="F:ATP binding"/>
    <property type="evidence" value="ECO:0007669"/>
    <property type="project" value="UniProtKB-KW"/>
</dbReference>
<dbReference type="GO" id="GO:0008887">
    <property type="term" value="F:glycerate kinase activity"/>
    <property type="evidence" value="ECO:0000314"/>
    <property type="project" value="UniProtKB"/>
</dbReference>
<dbReference type="GO" id="GO:0061624">
    <property type="term" value="P:fructose catabolic process to hydroxyacetone phosphate and glyceraldehyde-3-phosphate"/>
    <property type="evidence" value="ECO:0000304"/>
    <property type="project" value="Reactome"/>
</dbReference>
<dbReference type="GO" id="GO:0006468">
    <property type="term" value="P:protein phosphorylation"/>
    <property type="evidence" value="ECO:0000314"/>
    <property type="project" value="UniProtKB"/>
</dbReference>
<dbReference type="FunFam" id="3.40.50.10180:FF:000003">
    <property type="entry name" value="GLYCTK isoform 4"/>
    <property type="match status" value="1"/>
</dbReference>
<dbReference type="Gene3D" id="3.40.50.10180">
    <property type="entry name" value="Glycerate kinase, MOFRL-like N-terminal domain"/>
    <property type="match status" value="1"/>
</dbReference>
<dbReference type="Gene3D" id="3.40.1480.10">
    <property type="entry name" value="MOFRL domain"/>
    <property type="match status" value="1"/>
</dbReference>
<dbReference type="InterPro" id="IPR037035">
    <property type="entry name" value="GK-like_C_sf"/>
</dbReference>
<dbReference type="InterPro" id="IPR038614">
    <property type="entry name" value="GK_N_sf"/>
</dbReference>
<dbReference type="InterPro" id="IPR007835">
    <property type="entry name" value="MOFRL"/>
</dbReference>
<dbReference type="InterPro" id="IPR025286">
    <property type="entry name" value="MOFRL_assoc_dom"/>
</dbReference>
<dbReference type="InterPro" id="IPR039760">
    <property type="entry name" value="MOFRL_protein"/>
</dbReference>
<dbReference type="PANTHER" id="PTHR12227">
    <property type="entry name" value="GLYCERATE KINASE"/>
    <property type="match status" value="1"/>
</dbReference>
<dbReference type="PANTHER" id="PTHR12227:SF0">
    <property type="entry name" value="GLYCERATE KINASE"/>
    <property type="match status" value="1"/>
</dbReference>
<dbReference type="Pfam" id="PF13660">
    <property type="entry name" value="DUF4147"/>
    <property type="match status" value="1"/>
</dbReference>
<dbReference type="Pfam" id="PF05161">
    <property type="entry name" value="MOFRL"/>
    <property type="match status" value="1"/>
</dbReference>
<dbReference type="SUPFAM" id="SSF82544">
    <property type="entry name" value="GckA/TtuD-like"/>
    <property type="match status" value="1"/>
</dbReference>
<protein>
    <recommendedName>
        <fullName>Glycerate kinase</fullName>
        <ecNumber evidence="1 2">2.7.1.31</ecNumber>
    </recommendedName>
    <alternativeName>
        <fullName>HBeAg-binding protein 4</fullName>
    </alternativeName>
</protein>
<name>GLCTK_HUMAN</name>
<keyword id="KW-0025">Alternative splicing</keyword>
<keyword id="KW-0067">ATP-binding</keyword>
<keyword id="KW-0963">Cytoplasm</keyword>
<keyword id="KW-0225">Disease variant</keyword>
<keyword id="KW-0418">Kinase</keyword>
<keyword id="KW-0496">Mitochondrion</keyword>
<keyword id="KW-0547">Nucleotide-binding</keyword>
<keyword id="KW-0597">Phosphoprotein</keyword>
<keyword id="KW-1267">Proteomics identification</keyword>
<keyword id="KW-1185">Reference proteome</keyword>
<keyword id="KW-0808">Transferase</keyword>
<evidence type="ECO:0000269" key="1">
    <source>
    </source>
</evidence>
<evidence type="ECO:0000269" key="2">
    <source>
    </source>
</evidence>
<evidence type="ECO:0000303" key="3">
    <source>
    </source>
</evidence>
<evidence type="ECO:0000303" key="4">
    <source>
    </source>
</evidence>
<evidence type="ECO:0000303" key="5">
    <source>
    </source>
</evidence>
<evidence type="ECO:0000303" key="6">
    <source>
    </source>
</evidence>
<evidence type="ECO:0000303" key="7">
    <source ref="2"/>
</evidence>
<evidence type="ECO:0000303" key="8">
    <source ref="5"/>
</evidence>
<evidence type="ECO:0000305" key="9"/>
<evidence type="ECO:0007744" key="10">
    <source>
    </source>
</evidence>